<sequence>MDKATVYYFVGIKGSGMSSLALILHDKGYQVEGSDIEQYTFTQKGLAAAGIKMLPFSEDNIREGLTVIAGNSFTDDHPEIKKAREMGLPVYRYHEFLGKLMEGFTSIGVAGTHGKTSTTGLLSHVLSHIAPTSYLIGDGTGKGTPDARFFVFEADEYRRHFVAYHPDYAIMTNVDFDHPDYYKDLADVQSAFQQFGNQVKKGIFAWGDDESLRHLDVDTPIYYYGTNDRDDFQAVNIKRTTKGSSFEVKYHDESLGKFEIPLFGEHNVLNSTAVIAVSYFEKVNLDEIRRELLDFSGVKRRFSEHQVGDMVMIDDYAHHPSEIKATLDAARQKYPDKEILAVFQPHTFSRTKALMDGFAASLSKADHVFLTNIFSSAREKSGDVSSKDLAAKLPNGGEIITTDDMSALTAYHNAVAVFMGAGDIQKYEKIYEDQMK</sequence>
<protein>
    <recommendedName>
        <fullName evidence="1">UDP-N-acetylmuramate--L-alanine ligase</fullName>
        <ecNumber evidence="1">6.3.2.8</ecNumber>
    </recommendedName>
    <alternativeName>
        <fullName evidence="1">UDP-N-acetylmuramoyl-L-alanine synthetase</fullName>
    </alternativeName>
</protein>
<organism>
    <name type="scientific">Lactiplantibacillus plantarum (strain ATCC BAA-793 / NCIMB 8826 / WCFS1)</name>
    <name type="common">Lactobacillus plantarum</name>
    <dbReference type="NCBI Taxonomy" id="220668"/>
    <lineage>
        <taxon>Bacteria</taxon>
        <taxon>Bacillati</taxon>
        <taxon>Bacillota</taxon>
        <taxon>Bacilli</taxon>
        <taxon>Lactobacillales</taxon>
        <taxon>Lactobacillaceae</taxon>
        <taxon>Lactiplantibacillus</taxon>
    </lineage>
</organism>
<reference key="1">
    <citation type="journal article" date="2003" name="Proc. Natl. Acad. Sci. U.S.A.">
        <title>Complete genome sequence of Lactobacillus plantarum WCFS1.</title>
        <authorList>
            <person name="Kleerebezem M."/>
            <person name="Boekhorst J."/>
            <person name="van Kranenburg R."/>
            <person name="Molenaar D."/>
            <person name="Kuipers O.P."/>
            <person name="Leer R."/>
            <person name="Tarchini R."/>
            <person name="Peters S.A."/>
            <person name="Sandbrink H.M."/>
            <person name="Fiers M.W.E.J."/>
            <person name="Stiekema W."/>
            <person name="Klein Lankhorst R.M."/>
            <person name="Bron P.A."/>
            <person name="Hoffer S.M."/>
            <person name="Nierop Groot M.N."/>
            <person name="Kerkhoven R."/>
            <person name="De Vries M."/>
            <person name="Ursing B."/>
            <person name="De Vos W.M."/>
            <person name="Siezen R.J."/>
        </authorList>
    </citation>
    <scope>NUCLEOTIDE SEQUENCE [LARGE SCALE GENOMIC DNA]</scope>
    <source>
        <strain>ATCC BAA-793 / NCIMB 8826 / WCFS1</strain>
    </source>
</reference>
<reference key="2">
    <citation type="journal article" date="2012" name="J. Bacteriol.">
        <title>Complete resequencing and reannotation of the Lactobacillus plantarum WCFS1 genome.</title>
        <authorList>
            <person name="Siezen R.J."/>
            <person name="Francke C."/>
            <person name="Renckens B."/>
            <person name="Boekhorst J."/>
            <person name="Wels M."/>
            <person name="Kleerebezem M."/>
            <person name="van Hijum S.A."/>
        </authorList>
    </citation>
    <scope>NUCLEOTIDE SEQUENCE [LARGE SCALE GENOMIC DNA]</scope>
    <scope>GENOME REANNOTATION</scope>
    <source>
        <strain>ATCC BAA-793 / NCIMB 8826 / WCFS1</strain>
    </source>
</reference>
<evidence type="ECO:0000255" key="1">
    <source>
        <dbReference type="HAMAP-Rule" id="MF_00046"/>
    </source>
</evidence>
<keyword id="KW-0067">ATP-binding</keyword>
<keyword id="KW-0131">Cell cycle</keyword>
<keyword id="KW-0132">Cell division</keyword>
<keyword id="KW-0133">Cell shape</keyword>
<keyword id="KW-0961">Cell wall biogenesis/degradation</keyword>
<keyword id="KW-0963">Cytoplasm</keyword>
<keyword id="KW-0436">Ligase</keyword>
<keyword id="KW-0547">Nucleotide-binding</keyword>
<keyword id="KW-0573">Peptidoglycan synthesis</keyword>
<keyword id="KW-1185">Reference proteome</keyword>
<name>MURC_LACPL</name>
<comment type="function">
    <text evidence="1">Cell wall formation.</text>
</comment>
<comment type="catalytic activity">
    <reaction evidence="1">
        <text>UDP-N-acetyl-alpha-D-muramate + L-alanine + ATP = UDP-N-acetyl-alpha-D-muramoyl-L-alanine + ADP + phosphate + H(+)</text>
        <dbReference type="Rhea" id="RHEA:23372"/>
        <dbReference type="ChEBI" id="CHEBI:15378"/>
        <dbReference type="ChEBI" id="CHEBI:30616"/>
        <dbReference type="ChEBI" id="CHEBI:43474"/>
        <dbReference type="ChEBI" id="CHEBI:57972"/>
        <dbReference type="ChEBI" id="CHEBI:70757"/>
        <dbReference type="ChEBI" id="CHEBI:83898"/>
        <dbReference type="ChEBI" id="CHEBI:456216"/>
        <dbReference type="EC" id="6.3.2.8"/>
    </reaction>
</comment>
<comment type="pathway">
    <text evidence="1">Cell wall biogenesis; peptidoglycan biosynthesis.</text>
</comment>
<comment type="subcellular location">
    <subcellularLocation>
        <location evidence="1">Cytoplasm</location>
    </subcellularLocation>
</comment>
<comment type="similarity">
    <text evidence="1">Belongs to the MurCDEF family.</text>
</comment>
<dbReference type="EC" id="6.3.2.8" evidence="1"/>
<dbReference type="EMBL" id="AL935263">
    <property type="protein sequence ID" value="CCC78792.1"/>
    <property type="molecule type" value="Genomic_DNA"/>
</dbReference>
<dbReference type="RefSeq" id="WP_011101415.1">
    <property type="nucleotide sequence ID" value="NC_004567.2"/>
</dbReference>
<dbReference type="RefSeq" id="YP_004889306.1">
    <property type="nucleotide sequence ID" value="NC_004567.2"/>
</dbReference>
<dbReference type="SMR" id="Q88WZ5"/>
<dbReference type="STRING" id="220668.lp_1462"/>
<dbReference type="EnsemblBacteria" id="CCC78792">
    <property type="protein sequence ID" value="CCC78792"/>
    <property type="gene ID" value="lp_1462"/>
</dbReference>
<dbReference type="KEGG" id="lpl:lp_1462"/>
<dbReference type="PATRIC" id="fig|220668.9.peg.1225"/>
<dbReference type="eggNOG" id="COG0773">
    <property type="taxonomic scope" value="Bacteria"/>
</dbReference>
<dbReference type="HOGENOM" id="CLU_028104_1_0_9"/>
<dbReference type="OrthoDB" id="9804126at2"/>
<dbReference type="PhylomeDB" id="Q88WZ5"/>
<dbReference type="UniPathway" id="UPA00219"/>
<dbReference type="Proteomes" id="UP000000432">
    <property type="component" value="Chromosome"/>
</dbReference>
<dbReference type="GO" id="GO:0005737">
    <property type="term" value="C:cytoplasm"/>
    <property type="evidence" value="ECO:0007669"/>
    <property type="project" value="UniProtKB-SubCell"/>
</dbReference>
<dbReference type="GO" id="GO:0005524">
    <property type="term" value="F:ATP binding"/>
    <property type="evidence" value="ECO:0007669"/>
    <property type="project" value="UniProtKB-UniRule"/>
</dbReference>
<dbReference type="GO" id="GO:0008763">
    <property type="term" value="F:UDP-N-acetylmuramate-L-alanine ligase activity"/>
    <property type="evidence" value="ECO:0007669"/>
    <property type="project" value="UniProtKB-UniRule"/>
</dbReference>
<dbReference type="GO" id="GO:0051301">
    <property type="term" value="P:cell division"/>
    <property type="evidence" value="ECO:0007669"/>
    <property type="project" value="UniProtKB-KW"/>
</dbReference>
<dbReference type="GO" id="GO:0071555">
    <property type="term" value="P:cell wall organization"/>
    <property type="evidence" value="ECO:0007669"/>
    <property type="project" value="UniProtKB-KW"/>
</dbReference>
<dbReference type="GO" id="GO:0009252">
    <property type="term" value="P:peptidoglycan biosynthetic process"/>
    <property type="evidence" value="ECO:0007669"/>
    <property type="project" value="UniProtKB-UniRule"/>
</dbReference>
<dbReference type="GO" id="GO:0008360">
    <property type="term" value="P:regulation of cell shape"/>
    <property type="evidence" value="ECO:0007669"/>
    <property type="project" value="UniProtKB-KW"/>
</dbReference>
<dbReference type="Gene3D" id="3.90.190.20">
    <property type="entry name" value="Mur ligase, C-terminal domain"/>
    <property type="match status" value="1"/>
</dbReference>
<dbReference type="Gene3D" id="3.40.1190.10">
    <property type="entry name" value="Mur-like, catalytic domain"/>
    <property type="match status" value="1"/>
</dbReference>
<dbReference type="Gene3D" id="3.40.50.720">
    <property type="entry name" value="NAD(P)-binding Rossmann-like Domain"/>
    <property type="match status" value="1"/>
</dbReference>
<dbReference type="HAMAP" id="MF_00046">
    <property type="entry name" value="MurC"/>
    <property type="match status" value="1"/>
</dbReference>
<dbReference type="InterPro" id="IPR036565">
    <property type="entry name" value="Mur-like_cat_sf"/>
</dbReference>
<dbReference type="InterPro" id="IPR004101">
    <property type="entry name" value="Mur_ligase_C"/>
</dbReference>
<dbReference type="InterPro" id="IPR036615">
    <property type="entry name" value="Mur_ligase_C_dom_sf"/>
</dbReference>
<dbReference type="InterPro" id="IPR013221">
    <property type="entry name" value="Mur_ligase_cen"/>
</dbReference>
<dbReference type="InterPro" id="IPR000713">
    <property type="entry name" value="Mur_ligase_N"/>
</dbReference>
<dbReference type="InterPro" id="IPR050061">
    <property type="entry name" value="MurCDEF_pg_biosynth"/>
</dbReference>
<dbReference type="InterPro" id="IPR005758">
    <property type="entry name" value="UDP-N-AcMur_Ala_ligase_MurC"/>
</dbReference>
<dbReference type="NCBIfam" id="TIGR01082">
    <property type="entry name" value="murC"/>
    <property type="match status" value="1"/>
</dbReference>
<dbReference type="PANTHER" id="PTHR43445:SF3">
    <property type="entry name" value="UDP-N-ACETYLMURAMATE--L-ALANINE LIGASE"/>
    <property type="match status" value="1"/>
</dbReference>
<dbReference type="PANTHER" id="PTHR43445">
    <property type="entry name" value="UDP-N-ACETYLMURAMATE--L-ALANINE LIGASE-RELATED"/>
    <property type="match status" value="1"/>
</dbReference>
<dbReference type="Pfam" id="PF01225">
    <property type="entry name" value="Mur_ligase"/>
    <property type="match status" value="1"/>
</dbReference>
<dbReference type="Pfam" id="PF02875">
    <property type="entry name" value="Mur_ligase_C"/>
    <property type="match status" value="1"/>
</dbReference>
<dbReference type="Pfam" id="PF08245">
    <property type="entry name" value="Mur_ligase_M"/>
    <property type="match status" value="1"/>
</dbReference>
<dbReference type="SUPFAM" id="SSF51984">
    <property type="entry name" value="MurCD N-terminal domain"/>
    <property type="match status" value="1"/>
</dbReference>
<dbReference type="SUPFAM" id="SSF53623">
    <property type="entry name" value="MurD-like peptide ligases, catalytic domain"/>
    <property type="match status" value="1"/>
</dbReference>
<dbReference type="SUPFAM" id="SSF53244">
    <property type="entry name" value="MurD-like peptide ligases, peptide-binding domain"/>
    <property type="match status" value="1"/>
</dbReference>
<feature type="chain" id="PRO_0000182107" description="UDP-N-acetylmuramate--L-alanine ligase">
    <location>
        <begin position="1"/>
        <end position="436"/>
    </location>
</feature>
<feature type="binding site" evidence="1">
    <location>
        <begin position="111"/>
        <end position="117"/>
    </location>
    <ligand>
        <name>ATP</name>
        <dbReference type="ChEBI" id="CHEBI:30616"/>
    </ligand>
</feature>
<gene>
    <name evidence="1" type="primary">murC</name>
    <name type="ordered locus">lp_1462</name>
</gene>
<accession>Q88WZ5</accession>
<accession>F9UNK3</accession>
<proteinExistence type="inferred from homology"/>